<evidence type="ECO:0000250" key="1">
    <source>
        <dbReference type="UniProtKB" id="P62495"/>
    </source>
</evidence>
<evidence type="ECO:0000305" key="2"/>
<reference key="1">
    <citation type="journal article" date="2004" name="Genome Res.">
        <title>The status, quality, and expansion of the NIH full-length cDNA project: the Mammalian Gene Collection (MGC).</title>
        <authorList>
            <consortium name="The MGC Project Team"/>
        </authorList>
    </citation>
    <scope>NUCLEOTIDE SEQUENCE [LARGE SCALE MRNA]</scope>
    <source>
        <tissue>Heart</tissue>
    </source>
</reference>
<protein>
    <recommendedName>
        <fullName>Eukaryotic peptide chain release factor subunit 1</fullName>
        <shortName>Eukaryotic release factor 1</shortName>
        <shortName>eRF1</shortName>
    </recommendedName>
</protein>
<proteinExistence type="evidence at transcript level"/>
<keyword id="KW-0007">Acetylation</keyword>
<keyword id="KW-0963">Cytoplasm</keyword>
<keyword id="KW-0379">Hydroxylation</keyword>
<keyword id="KW-1017">Isopeptide bond</keyword>
<keyword id="KW-0488">Methylation</keyword>
<keyword id="KW-0866">Nonsense-mediated mRNA decay</keyword>
<keyword id="KW-0597">Phosphoprotein</keyword>
<keyword id="KW-0648">Protein biosynthesis</keyword>
<keyword id="KW-1185">Reference proteome</keyword>
<keyword id="KW-0832">Ubl conjugation</keyword>
<comment type="function">
    <text evidence="1">Component of the eRF1-eRF3-GTP ternary complex, a ternary complex that mediates translation termination in response to the termination codons. The eRF1-eRF3-GTP complex binds to a stop codon in the ribosomal A-site. ETF1/ERF1 is responsible for stop codon recognition and inducing hydrolysis of peptidyl-tRNA. Following GTP hydrolysis, eRF3 (GSPT1/ERF3A or GSPT2/ERF3B) dissociates, permitting ETF1/eRF1 to accommodate fully in the A-site, followed by hydrolysis of peptidyl-tRNA. Component of the transient SURF complex which recruits UPF1 to stalled ribosomes in the context of nonsense-mediated decay (NMD) of mRNAs containing premature stop codons. Required for SHFL-mediated translation termination which inhibits programmed ribosomal frameshifting (-1PRF) of mRNA from viruses and cellular genes.</text>
</comment>
<comment type="subunit">
    <text evidence="1">Component of the eRF1-eRF3-GTP ternary complex, composed of ETF1/ERF1 and eRF3 (GSPT1/ERF3A or GSPT2/ERF3B) and GTP. Component of the transient SURF (SMG1-UPF1-eRF1-eRF3) complex. Interacts with JMJD4. The ETF1-GSPT1 complex interacts with JMJD4.</text>
</comment>
<comment type="subcellular location">
    <subcellularLocation>
        <location evidence="1">Cytoplasm</location>
    </subcellularLocation>
</comment>
<comment type="PTM">
    <text evidence="1">Hydroxylation at Lys-63 by JMJD4 promotes its translational termination efficiency.</text>
</comment>
<comment type="PTM">
    <text evidence="1">Methylated at Gln-185 by N6AMT1.</text>
</comment>
<comment type="PTM">
    <text evidence="1">Ubiquitinated at Lys-279 via 'Lys-6'-linked polyubiquitin chains by RNF14 and RNF25 in response to ribosome collisions (ribosome stalling), leading to its degradation by the proteasome and rescue of stalled ribosomes.</text>
</comment>
<comment type="similarity">
    <text evidence="2">Belongs to the eukaryotic release factor 1 family.</text>
</comment>
<name>ERF1_RAT</name>
<dbReference type="EMBL" id="BC085902">
    <property type="protein sequence ID" value="AAH85902.1"/>
    <property type="molecule type" value="mRNA"/>
</dbReference>
<dbReference type="RefSeq" id="NP_001008345.1">
    <property type="nucleotide sequence ID" value="NM_001008344.1"/>
</dbReference>
<dbReference type="SMR" id="Q5U2Q7"/>
<dbReference type="BioGRID" id="258740">
    <property type="interactions" value="2"/>
</dbReference>
<dbReference type="FunCoup" id="Q5U2Q7">
    <property type="interactions" value="4943"/>
</dbReference>
<dbReference type="IntAct" id="Q5U2Q7">
    <property type="interactions" value="3"/>
</dbReference>
<dbReference type="STRING" id="10116.ENSRNOP00000026398"/>
<dbReference type="PhosphoSitePlus" id="Q5U2Q7"/>
<dbReference type="jPOST" id="Q5U2Q7"/>
<dbReference type="PaxDb" id="10116-ENSRNOP00000026398"/>
<dbReference type="Ensembl" id="ENSRNOT00000026398.6">
    <property type="protein sequence ID" value="ENSRNOP00000026398.4"/>
    <property type="gene ID" value="ENSRNOG00000019450.6"/>
</dbReference>
<dbReference type="GeneID" id="307503"/>
<dbReference type="KEGG" id="rno:307503"/>
<dbReference type="UCSC" id="RGD:1305712">
    <property type="organism name" value="rat"/>
</dbReference>
<dbReference type="AGR" id="RGD:1305712"/>
<dbReference type="CTD" id="2107"/>
<dbReference type="RGD" id="1305712">
    <property type="gene designation" value="Etf1"/>
</dbReference>
<dbReference type="eggNOG" id="KOG0688">
    <property type="taxonomic scope" value="Eukaryota"/>
</dbReference>
<dbReference type="GeneTree" id="ENSGT00390000009004"/>
<dbReference type="HOGENOM" id="CLU_035759_2_1_1"/>
<dbReference type="InParanoid" id="Q5U2Q7"/>
<dbReference type="OMA" id="RCNGSEE"/>
<dbReference type="OrthoDB" id="10254527at2759"/>
<dbReference type="PhylomeDB" id="Q5U2Q7"/>
<dbReference type="TreeFam" id="TF105672"/>
<dbReference type="Reactome" id="R-RNO-9629569">
    <property type="pathway name" value="Protein hydroxylation"/>
</dbReference>
<dbReference type="Reactome" id="R-RNO-975956">
    <property type="pathway name" value="Nonsense Mediated Decay (NMD) independent of the Exon Junction Complex (EJC)"/>
</dbReference>
<dbReference type="Reactome" id="R-RNO-975957">
    <property type="pathway name" value="Nonsense Mediated Decay (NMD) enhanced by the Exon Junction Complex (EJC)"/>
</dbReference>
<dbReference type="PRO" id="PR:Q5U2Q7"/>
<dbReference type="Proteomes" id="UP000002494">
    <property type="component" value="Chromosome 18"/>
</dbReference>
<dbReference type="Bgee" id="ENSRNOG00000019450">
    <property type="expression patterns" value="Expressed in quadriceps femoris and 19 other cell types or tissues"/>
</dbReference>
<dbReference type="GO" id="GO:0005737">
    <property type="term" value="C:cytoplasm"/>
    <property type="evidence" value="ECO:0000250"/>
    <property type="project" value="UniProtKB"/>
</dbReference>
<dbReference type="GO" id="GO:0005829">
    <property type="term" value="C:cytosol"/>
    <property type="evidence" value="ECO:0000318"/>
    <property type="project" value="GO_Central"/>
</dbReference>
<dbReference type="GO" id="GO:0022626">
    <property type="term" value="C:cytosolic ribosome"/>
    <property type="evidence" value="ECO:0000266"/>
    <property type="project" value="RGD"/>
</dbReference>
<dbReference type="GO" id="GO:0018444">
    <property type="term" value="C:translation release factor complex"/>
    <property type="evidence" value="ECO:0000266"/>
    <property type="project" value="RGD"/>
</dbReference>
<dbReference type="GO" id="GO:0004045">
    <property type="term" value="F:peptidyl-tRNA hydrolase activity"/>
    <property type="evidence" value="ECO:0000266"/>
    <property type="project" value="RGD"/>
</dbReference>
<dbReference type="GO" id="GO:1990825">
    <property type="term" value="F:sequence-specific mRNA binding"/>
    <property type="evidence" value="ECO:0000266"/>
    <property type="project" value="RGD"/>
</dbReference>
<dbReference type="GO" id="GO:0003747">
    <property type="term" value="F:translation release factor activity"/>
    <property type="evidence" value="ECO:0000266"/>
    <property type="project" value="RGD"/>
</dbReference>
<dbReference type="GO" id="GO:0016149">
    <property type="term" value="F:translation release factor activity, codon specific"/>
    <property type="evidence" value="ECO:0000318"/>
    <property type="project" value="GO_Central"/>
</dbReference>
<dbReference type="GO" id="GO:0008079">
    <property type="term" value="F:translation termination factor activity"/>
    <property type="evidence" value="ECO:0000250"/>
    <property type="project" value="UniProtKB"/>
</dbReference>
<dbReference type="GO" id="GO:0002184">
    <property type="term" value="P:cytoplasmic translational termination"/>
    <property type="evidence" value="ECO:0000318"/>
    <property type="project" value="GO_Central"/>
</dbReference>
<dbReference type="GO" id="GO:0000184">
    <property type="term" value="P:nuclear-transcribed mRNA catabolic process, nonsense-mediated decay"/>
    <property type="evidence" value="ECO:0007669"/>
    <property type="project" value="UniProtKB-KW"/>
</dbReference>
<dbReference type="GO" id="GO:0006449">
    <property type="term" value="P:regulation of translational termination"/>
    <property type="evidence" value="ECO:0000266"/>
    <property type="project" value="RGD"/>
</dbReference>
<dbReference type="GO" id="GO:0006415">
    <property type="term" value="P:translational termination"/>
    <property type="evidence" value="ECO:0000266"/>
    <property type="project" value="RGD"/>
</dbReference>
<dbReference type="FunFam" id="3.30.1330.30:FF:000009">
    <property type="entry name" value="Eukaryotic peptide chain release factor subunit 1"/>
    <property type="match status" value="1"/>
</dbReference>
<dbReference type="FunFam" id="3.30.420.60:FF:000001">
    <property type="entry name" value="Eukaryotic peptide chain release factor subunit 1"/>
    <property type="match status" value="1"/>
</dbReference>
<dbReference type="FunFam" id="3.30.960.10:FF:000001">
    <property type="entry name" value="Eukaryotic peptide chain release factor subunit 1"/>
    <property type="match status" value="1"/>
</dbReference>
<dbReference type="Gene3D" id="3.30.1330.30">
    <property type="match status" value="1"/>
</dbReference>
<dbReference type="Gene3D" id="3.30.960.10">
    <property type="entry name" value="eRF1 domain 1"/>
    <property type="match status" value="1"/>
</dbReference>
<dbReference type="Gene3D" id="3.30.420.60">
    <property type="entry name" value="eRF1 domain 2"/>
    <property type="match status" value="1"/>
</dbReference>
<dbReference type="InterPro" id="IPR042226">
    <property type="entry name" value="eFR1_2_sf"/>
</dbReference>
<dbReference type="InterPro" id="IPR005140">
    <property type="entry name" value="eRF1_1_Pelota"/>
</dbReference>
<dbReference type="InterPro" id="IPR024049">
    <property type="entry name" value="eRF1_1_sf"/>
</dbReference>
<dbReference type="InterPro" id="IPR005141">
    <property type="entry name" value="eRF1_2"/>
</dbReference>
<dbReference type="InterPro" id="IPR005142">
    <property type="entry name" value="eRF1_3"/>
</dbReference>
<dbReference type="InterPro" id="IPR004403">
    <property type="entry name" value="Peptide_chain-rel_eRF1/aRF1"/>
</dbReference>
<dbReference type="InterPro" id="IPR029064">
    <property type="entry name" value="Ribosomal_eL30-like_sf"/>
</dbReference>
<dbReference type="NCBIfam" id="TIGR03676">
    <property type="entry name" value="aRF1_eRF1"/>
    <property type="match status" value="1"/>
</dbReference>
<dbReference type="PANTHER" id="PTHR10113">
    <property type="entry name" value="PEPTIDE CHAIN RELEASE FACTOR SUBUNIT 1"/>
    <property type="match status" value="1"/>
</dbReference>
<dbReference type="Pfam" id="PF03463">
    <property type="entry name" value="eRF1_1"/>
    <property type="match status" value="1"/>
</dbReference>
<dbReference type="Pfam" id="PF03464">
    <property type="entry name" value="eRF1_2"/>
    <property type="match status" value="1"/>
</dbReference>
<dbReference type="Pfam" id="PF03465">
    <property type="entry name" value="eRF1_3"/>
    <property type="match status" value="1"/>
</dbReference>
<dbReference type="SMART" id="SM01194">
    <property type="entry name" value="eRF1_1"/>
    <property type="match status" value="1"/>
</dbReference>
<dbReference type="SUPFAM" id="SSF55315">
    <property type="entry name" value="L30e-like"/>
    <property type="match status" value="1"/>
</dbReference>
<dbReference type="SUPFAM" id="SSF55481">
    <property type="entry name" value="N-terminal domain of eukaryotic peptide chain release factor subunit 1, ERF1"/>
    <property type="match status" value="1"/>
</dbReference>
<dbReference type="SUPFAM" id="SSF53137">
    <property type="entry name" value="Translational machinery components"/>
    <property type="match status" value="1"/>
</dbReference>
<organism>
    <name type="scientific">Rattus norvegicus</name>
    <name type="common">Rat</name>
    <dbReference type="NCBI Taxonomy" id="10116"/>
    <lineage>
        <taxon>Eukaryota</taxon>
        <taxon>Metazoa</taxon>
        <taxon>Chordata</taxon>
        <taxon>Craniata</taxon>
        <taxon>Vertebrata</taxon>
        <taxon>Euteleostomi</taxon>
        <taxon>Mammalia</taxon>
        <taxon>Eutheria</taxon>
        <taxon>Euarchontoglires</taxon>
        <taxon>Glires</taxon>
        <taxon>Rodentia</taxon>
        <taxon>Myomorpha</taxon>
        <taxon>Muroidea</taxon>
        <taxon>Muridae</taxon>
        <taxon>Murinae</taxon>
        <taxon>Rattus</taxon>
    </lineage>
</organism>
<sequence>MADDPSAADRNVEIWKIKKLIKSLEAARGNGTSMISLIIPPKDQISRVAKMLADEFGTASNIKSRVNRLSVLGAITSVQQRLKLYNKVPPNGLVVYCGTIVTEEGKEKKVNIDFEPFKPINTSLYLCDNKFHTEALTALLSDDSKFGFIVIDGSGALFGTLQGNTREVLHKFTVDLPKKHGRGGQSALRFARLRMEKRHNYVRKVAETAVQLFISGDKVNVAGLVLAGSADFKTELSQSDMFDQRLQSKVLKLVDISYGGENGFNQAIELSTEVLSNVKFIQEKKLIGRYFDEISQDTGKYCFGVEDTLKALEMGAVEILIVYENLDIMRYVLHCQGTEEEKILYLTPEQEKDKSHFTDKETGQEHELIESMPLLEWFANNYKKFGATLEIVTDKSQEGSQFVKGFGGIGGILRYRVDFQGMEYQGGDDEFFDLDDY</sequence>
<feature type="initiator methionine" description="Removed" evidence="1">
    <location>
        <position position="1"/>
    </location>
</feature>
<feature type="chain" id="PRO_0000143143" description="Eukaryotic peptide chain release factor subunit 1">
    <location>
        <begin position="2"/>
        <end position="437"/>
    </location>
</feature>
<feature type="short sequence motif" description="NIKS motif; plays an important role in translational termination" evidence="1">
    <location>
        <begin position="61"/>
        <end position="64"/>
    </location>
</feature>
<feature type="modified residue" description="N-acetylalanine" evidence="1">
    <location>
        <position position="2"/>
    </location>
</feature>
<feature type="modified residue" description="4-hydroxylysine" evidence="1">
    <location>
        <position position="63"/>
    </location>
</feature>
<feature type="modified residue" description="N5-methylglutamine" evidence="1">
    <location>
        <position position="185"/>
    </location>
</feature>
<feature type="modified residue" description="Phosphothreonine" evidence="1">
    <location>
        <position position="347"/>
    </location>
</feature>
<feature type="cross-link" description="Glycyl lysine isopeptide (Lys-Gly) (interchain with G-Cter in SUMO2)" evidence="1">
    <location>
        <position position="87"/>
    </location>
</feature>
<feature type="cross-link" description="Glycyl lysine isopeptide (Lys-Gly) (interchain with G-Cter in ubiquitin)" evidence="1">
    <location>
        <position position="279"/>
    </location>
</feature>
<feature type="cross-link" description="Glycyl lysine isopeptide (Lys-Gly) (interchain with G-Cter in SUMO2)" evidence="1">
    <location>
        <position position="404"/>
    </location>
</feature>
<gene>
    <name type="primary">Etf1</name>
</gene>
<accession>Q5U2Q7</accession>